<accession>Q91175</accession>
<protein>
    <recommendedName>
        <fullName>Alpha-1A adrenergic receptor</fullName>
    </recommendedName>
    <alternativeName>
        <fullName>Alpha-1A adrenoreceptor</fullName>
        <shortName>Alpha-1A adrenoceptor</shortName>
    </alternativeName>
    <alternativeName>
        <fullName>MAR1</fullName>
    </alternativeName>
</protein>
<feature type="chain" id="PRO_0000069067" description="Alpha-1A adrenergic receptor">
    <location>
        <begin position="1"/>
        <end position="470"/>
    </location>
</feature>
<feature type="topological domain" description="Extracellular" evidence="1">
    <location>
        <begin position="1"/>
        <end position="27"/>
    </location>
</feature>
<feature type="transmembrane region" description="Helical; Name=1" evidence="1">
    <location>
        <begin position="28"/>
        <end position="51"/>
    </location>
</feature>
<feature type="topological domain" description="Cytoplasmic" evidence="1">
    <location>
        <begin position="52"/>
        <end position="64"/>
    </location>
</feature>
<feature type="transmembrane region" description="Helical; Name=2" evidence="1">
    <location>
        <begin position="65"/>
        <end position="88"/>
    </location>
</feature>
<feature type="topological domain" description="Extracellular" evidence="1">
    <location>
        <begin position="89"/>
        <end position="99"/>
    </location>
</feature>
<feature type="transmembrane region" description="Helical; Name=3" evidence="1">
    <location>
        <begin position="100"/>
        <end position="122"/>
    </location>
</feature>
<feature type="topological domain" description="Cytoplasmic" evidence="1">
    <location>
        <begin position="123"/>
        <end position="143"/>
    </location>
</feature>
<feature type="transmembrane region" description="Helical; Name=4" evidence="1">
    <location>
        <begin position="144"/>
        <end position="167"/>
    </location>
</feature>
<feature type="topological domain" description="Extracellular" evidence="1">
    <location>
        <begin position="168"/>
        <end position="181"/>
    </location>
</feature>
<feature type="transmembrane region" description="Helical; Name=5" evidence="1">
    <location>
        <begin position="182"/>
        <end position="205"/>
    </location>
</feature>
<feature type="topological domain" description="Cytoplasmic" evidence="1">
    <location>
        <begin position="206"/>
        <end position="271"/>
    </location>
</feature>
<feature type="transmembrane region" description="Helical; Name=6" evidence="1">
    <location>
        <begin position="272"/>
        <end position="295"/>
    </location>
</feature>
<feature type="topological domain" description="Extracellular" evidence="1">
    <location>
        <begin position="296"/>
        <end position="303"/>
    </location>
</feature>
<feature type="transmembrane region" description="Helical; Name=7" evidence="1">
    <location>
        <begin position="304"/>
        <end position="327"/>
    </location>
</feature>
<feature type="topological domain" description="Cytoplasmic" evidence="1">
    <location>
        <begin position="328"/>
        <end position="470"/>
    </location>
</feature>
<feature type="region of interest" description="Disordered" evidence="4">
    <location>
        <begin position="375"/>
        <end position="416"/>
    </location>
</feature>
<feature type="compositionally biased region" description="Polar residues" evidence="4">
    <location>
        <begin position="381"/>
        <end position="392"/>
    </location>
</feature>
<feature type="lipid moiety-binding region" description="S-palmitoyl cysteine" evidence="2">
    <location>
        <position position="343"/>
    </location>
</feature>
<feature type="glycosylation site" description="N-linked (GlcNAc...) asparagine" evidence="2">
    <location>
        <position position="9"/>
    </location>
</feature>
<feature type="glycosylation site" description="N-linked (GlcNAc...) asparagine" evidence="2">
    <location>
        <position position="12"/>
    </location>
</feature>
<feature type="disulfide bond" evidence="3">
    <location>
        <begin position="99"/>
        <end position="176"/>
    </location>
</feature>
<keyword id="KW-1003">Cell membrane</keyword>
<keyword id="KW-1015">Disulfide bond</keyword>
<keyword id="KW-0297">G-protein coupled receptor</keyword>
<keyword id="KW-0325">Glycoprotein</keyword>
<keyword id="KW-0449">Lipoprotein</keyword>
<keyword id="KW-0472">Membrane</keyword>
<keyword id="KW-0564">Palmitate</keyword>
<keyword id="KW-0597">Phosphoprotein</keyword>
<keyword id="KW-0675">Receptor</keyword>
<keyword id="KW-1185">Reference proteome</keyword>
<keyword id="KW-0807">Transducer</keyword>
<keyword id="KW-0812">Transmembrane</keyword>
<keyword id="KW-1133">Transmembrane helix</keyword>
<dbReference type="EMBL" id="D63859">
    <property type="protein sequence ID" value="BAA09921.1"/>
    <property type="molecule type" value="Genomic_DNA"/>
</dbReference>
<dbReference type="SMR" id="Q91175"/>
<dbReference type="FunCoup" id="Q91175">
    <property type="interactions" value="752"/>
</dbReference>
<dbReference type="STRING" id="8090.ENSORLP00000015226"/>
<dbReference type="GlyCosmos" id="Q91175">
    <property type="glycosylation" value="2 sites, No reported glycans"/>
</dbReference>
<dbReference type="eggNOG" id="KOG3656">
    <property type="taxonomic scope" value="Eukaryota"/>
</dbReference>
<dbReference type="InParanoid" id="Q91175"/>
<dbReference type="Proteomes" id="UP000001038">
    <property type="component" value="Unplaced"/>
</dbReference>
<dbReference type="Proteomes" id="UP000265180">
    <property type="component" value="Chromosome 9"/>
</dbReference>
<dbReference type="Proteomes" id="UP000265200">
    <property type="component" value="Chromosome 9"/>
</dbReference>
<dbReference type="GO" id="GO:0005886">
    <property type="term" value="C:plasma membrane"/>
    <property type="evidence" value="ECO:0000318"/>
    <property type="project" value="GO_Central"/>
</dbReference>
<dbReference type="GO" id="GO:0004937">
    <property type="term" value="F:alpha1-adrenergic receptor activity"/>
    <property type="evidence" value="ECO:0000318"/>
    <property type="project" value="GO_Central"/>
</dbReference>
<dbReference type="GO" id="GO:0071880">
    <property type="term" value="P:adenylate cyclase-activating adrenergic receptor signaling pathway"/>
    <property type="evidence" value="ECO:0000318"/>
    <property type="project" value="GO_Central"/>
</dbReference>
<dbReference type="GO" id="GO:0007267">
    <property type="term" value="P:cell-cell signaling"/>
    <property type="evidence" value="ECO:0000318"/>
    <property type="project" value="GO_Central"/>
</dbReference>
<dbReference type="GO" id="GO:0007200">
    <property type="term" value="P:phospholipase C-activating G protein-coupled receptor signaling pathway"/>
    <property type="evidence" value="ECO:0000318"/>
    <property type="project" value="GO_Central"/>
</dbReference>
<dbReference type="GO" id="GO:0007204">
    <property type="term" value="P:positive regulation of cytosolic calcium ion concentration"/>
    <property type="evidence" value="ECO:0000318"/>
    <property type="project" value="GO_Central"/>
</dbReference>
<dbReference type="GO" id="GO:0043410">
    <property type="term" value="P:positive regulation of MAPK cascade"/>
    <property type="evidence" value="ECO:0000318"/>
    <property type="project" value="GO_Central"/>
</dbReference>
<dbReference type="CDD" id="cd15325">
    <property type="entry name" value="7tmA_alpha1A_AR"/>
    <property type="match status" value="1"/>
</dbReference>
<dbReference type="FunFam" id="1.20.1070.10:FF:000027">
    <property type="entry name" value="alpha-1A adrenergic receptor"/>
    <property type="match status" value="1"/>
</dbReference>
<dbReference type="Gene3D" id="1.20.1070.10">
    <property type="entry name" value="Rhodopsin 7-helix transmembrane proteins"/>
    <property type="match status" value="1"/>
</dbReference>
<dbReference type="InterPro" id="IPR002233">
    <property type="entry name" value="ADR_fam"/>
</dbReference>
<dbReference type="InterPro" id="IPR000276">
    <property type="entry name" value="GPCR_Rhodpsn"/>
</dbReference>
<dbReference type="InterPro" id="IPR017452">
    <property type="entry name" value="GPCR_Rhodpsn_7TM"/>
</dbReference>
<dbReference type="PANTHER" id="PTHR24248">
    <property type="entry name" value="ADRENERGIC RECEPTOR-RELATED G-PROTEIN COUPLED RECEPTOR"/>
    <property type="match status" value="1"/>
</dbReference>
<dbReference type="PANTHER" id="PTHR24248:SF16">
    <property type="entry name" value="ALPHA-1A ADRENERGIC RECEPTOR"/>
    <property type="match status" value="1"/>
</dbReference>
<dbReference type="Pfam" id="PF00001">
    <property type="entry name" value="7tm_1"/>
    <property type="match status" value="1"/>
</dbReference>
<dbReference type="PRINTS" id="PR01103">
    <property type="entry name" value="ADRENERGICR"/>
</dbReference>
<dbReference type="PRINTS" id="PR00237">
    <property type="entry name" value="GPCRRHODOPSN"/>
</dbReference>
<dbReference type="SMART" id="SM01381">
    <property type="entry name" value="7TM_GPCR_Srsx"/>
    <property type="match status" value="1"/>
</dbReference>
<dbReference type="SUPFAM" id="SSF81321">
    <property type="entry name" value="Family A G protein-coupled receptor-like"/>
    <property type="match status" value="1"/>
</dbReference>
<dbReference type="PROSITE" id="PS00237">
    <property type="entry name" value="G_PROTEIN_RECEP_F1_1"/>
    <property type="match status" value="1"/>
</dbReference>
<dbReference type="PROSITE" id="PS50262">
    <property type="entry name" value="G_PROTEIN_RECEP_F1_2"/>
    <property type="match status" value="1"/>
</dbReference>
<organism>
    <name type="scientific">Oryzias latipes</name>
    <name type="common">Japanese rice fish</name>
    <name type="synonym">Japanese killifish</name>
    <dbReference type="NCBI Taxonomy" id="8090"/>
    <lineage>
        <taxon>Eukaryota</taxon>
        <taxon>Metazoa</taxon>
        <taxon>Chordata</taxon>
        <taxon>Craniata</taxon>
        <taxon>Vertebrata</taxon>
        <taxon>Euteleostomi</taxon>
        <taxon>Actinopterygii</taxon>
        <taxon>Neopterygii</taxon>
        <taxon>Teleostei</taxon>
        <taxon>Neoteleostei</taxon>
        <taxon>Acanthomorphata</taxon>
        <taxon>Ovalentaria</taxon>
        <taxon>Atherinomorphae</taxon>
        <taxon>Beloniformes</taxon>
        <taxon>Adrianichthyidae</taxon>
        <taxon>Oryziinae</taxon>
        <taxon>Oryzias</taxon>
    </lineage>
</organism>
<comment type="function">
    <text evidence="1">This alpha-adrenergic receptor mediates its action by association with G proteins that activate a phosphatidylinositol-calcium second messenger system.</text>
</comment>
<comment type="subcellular location">
    <subcellularLocation>
        <location>Cell membrane</location>
        <topology>Multi-pass membrane protein</topology>
    </subcellularLocation>
</comment>
<comment type="similarity">
    <text evidence="3">Belongs to the G-protein coupled receptor 1 family. Adrenergic receptor subfamily. ADRA1A sub-subfamily.</text>
</comment>
<name>ADA1A_ORYLA</name>
<reference key="1">
    <citation type="journal article" date="1996" name="Eur. J. Biochem.">
        <title>Molecular cloning and functional expression of the alpha1A-adrenoceptor of Medaka fish, Oryzias latipes.</title>
        <authorList>
            <person name="Yasuoka A."/>
            <person name="Abe K."/>
            <person name="Arai S."/>
            <person name="Emori Y."/>
        </authorList>
    </citation>
    <scope>NUCLEOTIDE SEQUENCE [GENOMIC DNA]</scope>
</reference>
<evidence type="ECO:0000250" key="1"/>
<evidence type="ECO:0000255" key="2"/>
<evidence type="ECO:0000255" key="3">
    <source>
        <dbReference type="PROSITE-ProRule" id="PRU00521"/>
    </source>
</evidence>
<evidence type="ECO:0000256" key="4">
    <source>
        <dbReference type="SAM" id="MobiDB-lite"/>
    </source>
</evidence>
<proteinExistence type="inferred from homology"/>
<sequence>MTPSSVTLNCSNCSHVLAPELNTVKAVVLGMVLGIFILFGVIGNILVILSVVCHRHLQTVTYYFIVNLAVADLLLSSTVLPFSAIFEILDRWVFGRVFCNIWAAVDVLCCTASIMSLCVISVDRYIGVSYPLRYPAIMTKRRALLAVMLLWVLSVIISIGPLFGWKEPAPEDETVCKITEEPGYAIFSAVGSFYLPLAIILAMYCRVYVVAQKESRGLKEGQKIEKSDSEQVILRMHRGNTTVSEDEALRSRTHFALRLLKFSREKKAAKTLGIVVGCFVLCWLPFFLVLPIGSIFPAYRPSDTVFKITFWLGYFNSCINPIIYLCSNQEFKKAFQSLLGVHCLRMTPRAHHHHLSVGQSQTQGHSLTISLDSKGAPCRLSPSSSVALSRTPSSRDSREWRVFSGGPINSGPGPTEAGRAKVAKLCNKSLHRTCCCILRARTPTQDPAPLGDLPTIKIHQLSLSEKGESV</sequence>
<gene>
    <name type="primary">adra1a</name>
</gene>